<keyword id="KW-0067">ATP-binding</keyword>
<keyword id="KW-0963">Cytoplasm</keyword>
<keyword id="KW-1015">Disulfide bond</keyword>
<keyword id="KW-0547">Nucleotide-binding</keyword>
<keyword id="KW-1185">Reference proteome</keyword>
<keyword id="KW-0694">RNA-binding</keyword>
<keyword id="KW-0808">Transferase</keyword>
<keyword id="KW-0819">tRNA processing</keyword>
<keyword id="KW-0820">tRNA-binding</keyword>
<comment type="function">
    <text evidence="1">Catalyzes the 2-thiolation of uridine at the wobble position (U34) of tRNA, leading to the formation of s(2)U34.</text>
</comment>
<comment type="catalytic activity">
    <reaction evidence="1">
        <text>S-sulfanyl-L-cysteinyl-[protein] + uridine(34) in tRNA + AH2 + ATP = 2-thiouridine(34) in tRNA + L-cysteinyl-[protein] + A + AMP + diphosphate + H(+)</text>
        <dbReference type="Rhea" id="RHEA:47032"/>
        <dbReference type="Rhea" id="RHEA-COMP:10131"/>
        <dbReference type="Rhea" id="RHEA-COMP:11726"/>
        <dbReference type="Rhea" id="RHEA-COMP:11727"/>
        <dbReference type="Rhea" id="RHEA-COMP:11728"/>
        <dbReference type="ChEBI" id="CHEBI:13193"/>
        <dbReference type="ChEBI" id="CHEBI:15378"/>
        <dbReference type="ChEBI" id="CHEBI:17499"/>
        <dbReference type="ChEBI" id="CHEBI:29950"/>
        <dbReference type="ChEBI" id="CHEBI:30616"/>
        <dbReference type="ChEBI" id="CHEBI:33019"/>
        <dbReference type="ChEBI" id="CHEBI:61963"/>
        <dbReference type="ChEBI" id="CHEBI:65315"/>
        <dbReference type="ChEBI" id="CHEBI:87170"/>
        <dbReference type="ChEBI" id="CHEBI:456215"/>
        <dbReference type="EC" id="2.8.1.13"/>
    </reaction>
</comment>
<comment type="subcellular location">
    <subcellularLocation>
        <location evidence="1">Cytoplasm</location>
    </subcellularLocation>
</comment>
<comment type="similarity">
    <text evidence="1">Belongs to the MnmA/TRMU family.</text>
</comment>
<organism>
    <name type="scientific">Clostridium acetobutylicum (strain ATCC 824 / DSM 792 / JCM 1419 / IAM 19013 / LMG 5710 / NBRC 13948 / NRRL B-527 / VKM B-1787 / 2291 / W)</name>
    <dbReference type="NCBI Taxonomy" id="272562"/>
    <lineage>
        <taxon>Bacteria</taxon>
        <taxon>Bacillati</taxon>
        <taxon>Bacillota</taxon>
        <taxon>Clostridia</taxon>
        <taxon>Eubacteriales</taxon>
        <taxon>Clostridiaceae</taxon>
        <taxon>Clostridium</taxon>
    </lineage>
</organism>
<reference key="1">
    <citation type="journal article" date="2001" name="J. Bacteriol.">
        <title>Genome sequence and comparative analysis of the solvent-producing bacterium Clostridium acetobutylicum.</title>
        <authorList>
            <person name="Noelling J."/>
            <person name="Breton G."/>
            <person name="Omelchenko M.V."/>
            <person name="Makarova K.S."/>
            <person name="Zeng Q."/>
            <person name="Gibson R."/>
            <person name="Lee H.M."/>
            <person name="Dubois J."/>
            <person name="Qiu D."/>
            <person name="Hitti J."/>
            <person name="Wolf Y.I."/>
            <person name="Tatusov R.L."/>
            <person name="Sabathe F."/>
            <person name="Doucette-Stamm L.A."/>
            <person name="Soucaille P."/>
            <person name="Daly M.J."/>
            <person name="Bennett G.N."/>
            <person name="Koonin E.V."/>
            <person name="Smith D.R."/>
        </authorList>
    </citation>
    <scope>NUCLEOTIDE SEQUENCE [LARGE SCALE GENOMIC DNA]</scope>
    <source>
        <strain>ATCC 824 / DSM 792 / JCM 1419 / IAM 19013 / LMG 5710 / NBRC 13948 / NRRL B-527 / VKM B-1787 / 2291 / W</strain>
    </source>
</reference>
<proteinExistence type="inferred from homology"/>
<protein>
    <recommendedName>
        <fullName evidence="1">tRNA-specific 2-thiouridylase MnmA</fullName>
        <ecNumber evidence="1">2.8.1.13</ecNumber>
    </recommendedName>
</protein>
<evidence type="ECO:0000255" key="1">
    <source>
        <dbReference type="HAMAP-Rule" id="MF_00144"/>
    </source>
</evidence>
<name>MNMA_CLOAB</name>
<accession>Q97GY2</accession>
<sequence>MNKKVVIGMSGGVDSSVAAYLLKEQGYDVIGVTMKLTPDDAFYTEQEGGCCSLSAVEDARRVAYRIGIPFYVVNFTDIFKEKVIDYFTEEYLNGKTPNPCIACNKYIKFDALLKKAESLGADYIATGHYCRIVEENGRYVIRKSEDEKKDQTYVMYNMTQDQLKHTLMPCGDYKKDRIREIAREIGLNVFDKKDSEEICFIPDNDHGGFIKRECPKAVKTGNFVDKEGKVLGKHKGIIYYTIGQRKGLGIATGKRVFVTNIDAMKNQVVIGEEEEIFENELISFKNNFIPFDKLTEPMEVDAKIRYNAKASKATIYPVDDENVKVKFEKPQRAITKGQSVVFYDGDLLVGGGIIK</sequence>
<gene>
    <name evidence="1" type="primary">mnmA</name>
    <name type="synonym">trmU</name>
    <name type="ordered locus">CA_C2233</name>
</gene>
<feature type="chain" id="PRO_0000121626" description="tRNA-specific 2-thiouridylase MnmA">
    <location>
        <begin position="1"/>
        <end position="355"/>
    </location>
</feature>
<feature type="region of interest" description="Interaction with tRNA" evidence="1">
    <location>
        <begin position="149"/>
        <end position="151"/>
    </location>
</feature>
<feature type="region of interest" description="Interaction with tRNA" evidence="1">
    <location>
        <begin position="305"/>
        <end position="306"/>
    </location>
</feature>
<feature type="active site" description="Nucleophile" evidence="1">
    <location>
        <position position="103"/>
    </location>
</feature>
<feature type="active site" description="Cysteine persulfide intermediate" evidence="1">
    <location>
        <position position="199"/>
    </location>
</feature>
<feature type="binding site" evidence="1">
    <location>
        <begin position="8"/>
        <end position="15"/>
    </location>
    <ligand>
        <name>ATP</name>
        <dbReference type="ChEBI" id="CHEBI:30616"/>
    </ligand>
</feature>
<feature type="binding site" evidence="1">
    <location>
        <position position="34"/>
    </location>
    <ligand>
        <name>ATP</name>
        <dbReference type="ChEBI" id="CHEBI:30616"/>
    </ligand>
</feature>
<feature type="binding site" evidence="1">
    <location>
        <position position="127"/>
    </location>
    <ligand>
        <name>ATP</name>
        <dbReference type="ChEBI" id="CHEBI:30616"/>
    </ligand>
</feature>
<feature type="site" description="Interaction with tRNA" evidence="1">
    <location>
        <position position="128"/>
    </location>
</feature>
<feature type="site" description="Interaction with tRNA" evidence="1">
    <location>
        <position position="338"/>
    </location>
</feature>
<feature type="disulfide bond" description="Alternate" evidence="1">
    <location>
        <begin position="103"/>
        <end position="199"/>
    </location>
</feature>
<dbReference type="EC" id="2.8.1.13" evidence="1"/>
<dbReference type="EMBL" id="AE001437">
    <property type="protein sequence ID" value="AAK80190.1"/>
    <property type="molecule type" value="Genomic_DNA"/>
</dbReference>
<dbReference type="PIR" id="C97175">
    <property type="entry name" value="C97175"/>
</dbReference>
<dbReference type="RefSeq" id="NP_348850.1">
    <property type="nucleotide sequence ID" value="NC_003030.1"/>
</dbReference>
<dbReference type="RefSeq" id="WP_010965531.1">
    <property type="nucleotide sequence ID" value="NC_003030.1"/>
</dbReference>
<dbReference type="SMR" id="Q97GY2"/>
<dbReference type="STRING" id="272562.CA_C2233"/>
<dbReference type="GeneID" id="44998712"/>
<dbReference type="KEGG" id="cac:CA_C2233"/>
<dbReference type="PATRIC" id="fig|272562.8.peg.2434"/>
<dbReference type="eggNOG" id="COG0482">
    <property type="taxonomic scope" value="Bacteria"/>
</dbReference>
<dbReference type="HOGENOM" id="CLU_035188_0_0_9"/>
<dbReference type="OrthoDB" id="9800696at2"/>
<dbReference type="Proteomes" id="UP000000814">
    <property type="component" value="Chromosome"/>
</dbReference>
<dbReference type="GO" id="GO:0005737">
    <property type="term" value="C:cytoplasm"/>
    <property type="evidence" value="ECO:0007669"/>
    <property type="project" value="UniProtKB-SubCell"/>
</dbReference>
<dbReference type="GO" id="GO:0005524">
    <property type="term" value="F:ATP binding"/>
    <property type="evidence" value="ECO:0007669"/>
    <property type="project" value="UniProtKB-KW"/>
</dbReference>
<dbReference type="GO" id="GO:0000049">
    <property type="term" value="F:tRNA binding"/>
    <property type="evidence" value="ECO:0007669"/>
    <property type="project" value="UniProtKB-KW"/>
</dbReference>
<dbReference type="GO" id="GO:0103016">
    <property type="term" value="F:tRNA-uridine 2-sulfurtransferase activity"/>
    <property type="evidence" value="ECO:0007669"/>
    <property type="project" value="UniProtKB-EC"/>
</dbReference>
<dbReference type="GO" id="GO:0002143">
    <property type="term" value="P:tRNA wobble position uridine thiolation"/>
    <property type="evidence" value="ECO:0007669"/>
    <property type="project" value="TreeGrafter"/>
</dbReference>
<dbReference type="CDD" id="cd01998">
    <property type="entry name" value="MnmA_TRMU-like"/>
    <property type="match status" value="1"/>
</dbReference>
<dbReference type="FunFam" id="2.30.30.280:FF:000001">
    <property type="entry name" value="tRNA-specific 2-thiouridylase MnmA"/>
    <property type="match status" value="1"/>
</dbReference>
<dbReference type="FunFam" id="2.40.30.10:FF:000023">
    <property type="entry name" value="tRNA-specific 2-thiouridylase MnmA"/>
    <property type="match status" value="1"/>
</dbReference>
<dbReference type="FunFam" id="3.40.50.620:FF:000115">
    <property type="entry name" value="tRNA-specific 2-thiouridylase MnmA"/>
    <property type="match status" value="1"/>
</dbReference>
<dbReference type="Gene3D" id="2.30.30.280">
    <property type="entry name" value="Adenine nucleotide alpha hydrolases-like domains"/>
    <property type="match status" value="1"/>
</dbReference>
<dbReference type="Gene3D" id="3.40.50.620">
    <property type="entry name" value="HUPs"/>
    <property type="match status" value="1"/>
</dbReference>
<dbReference type="Gene3D" id="2.40.30.10">
    <property type="entry name" value="Translation factors"/>
    <property type="match status" value="1"/>
</dbReference>
<dbReference type="HAMAP" id="MF_00144">
    <property type="entry name" value="tRNA_thiouridyl_MnmA"/>
    <property type="match status" value="1"/>
</dbReference>
<dbReference type="InterPro" id="IPR004506">
    <property type="entry name" value="MnmA-like"/>
</dbReference>
<dbReference type="InterPro" id="IPR046885">
    <property type="entry name" value="MnmA-like_C"/>
</dbReference>
<dbReference type="InterPro" id="IPR046884">
    <property type="entry name" value="MnmA-like_central"/>
</dbReference>
<dbReference type="InterPro" id="IPR023382">
    <property type="entry name" value="MnmA-like_central_sf"/>
</dbReference>
<dbReference type="InterPro" id="IPR014729">
    <property type="entry name" value="Rossmann-like_a/b/a_fold"/>
</dbReference>
<dbReference type="NCBIfam" id="NF001138">
    <property type="entry name" value="PRK00143.1"/>
    <property type="match status" value="1"/>
</dbReference>
<dbReference type="NCBIfam" id="TIGR00420">
    <property type="entry name" value="trmU"/>
    <property type="match status" value="1"/>
</dbReference>
<dbReference type="PANTHER" id="PTHR11933:SF5">
    <property type="entry name" value="MITOCHONDRIAL TRNA-SPECIFIC 2-THIOURIDYLASE 1"/>
    <property type="match status" value="1"/>
</dbReference>
<dbReference type="PANTHER" id="PTHR11933">
    <property type="entry name" value="TRNA 5-METHYLAMINOMETHYL-2-THIOURIDYLATE -METHYLTRANSFERASE"/>
    <property type="match status" value="1"/>
</dbReference>
<dbReference type="Pfam" id="PF03054">
    <property type="entry name" value="tRNA_Me_trans"/>
    <property type="match status" value="1"/>
</dbReference>
<dbReference type="Pfam" id="PF20258">
    <property type="entry name" value="tRNA_Me_trans_C"/>
    <property type="match status" value="1"/>
</dbReference>
<dbReference type="Pfam" id="PF20259">
    <property type="entry name" value="tRNA_Me_trans_M"/>
    <property type="match status" value="1"/>
</dbReference>
<dbReference type="SUPFAM" id="SSF52402">
    <property type="entry name" value="Adenine nucleotide alpha hydrolases-like"/>
    <property type="match status" value="1"/>
</dbReference>